<comment type="function">
    <text evidence="1">Sodium channel (Nav) specific neurotoxin.</text>
</comment>
<comment type="subcellular location">
    <subcellularLocation>
        <location evidence="2">Secreted</location>
    </subcellularLocation>
</comment>
<comment type="tissue specificity">
    <text evidence="5">Expressed by the venom gland.</text>
</comment>
<comment type="domain">
    <text evidence="5">Has the structural arrangement of an alpha-helix connected to antiparallel beta-sheets by disulfide bonds (CS-alpha/beta).</text>
</comment>
<comment type="similarity">
    <text evidence="5">Belongs to the long (4 C-C) scorpion toxin superfamily. Sodium channel inhibitor family.</text>
</comment>
<reference evidence="5 6" key="1">
    <citation type="journal article" date="2004" name="Eur. J. Biochem.">
        <title>Phaiodotoxin, a novel structural class of insect-toxin isolated from the venom of the Mexican scorpion Anuroctonus phaiodactylus.</title>
        <authorList>
            <person name="Valdez-Cruz N.A."/>
            <person name="Batista C.V.F."/>
            <person name="Zamudio F.Z."/>
            <person name="Bosmans F."/>
            <person name="Tytgat J."/>
            <person name="Possani L.D."/>
        </authorList>
    </citation>
    <scope>NUCLEOTIDE SEQUENCE [MRNA]</scope>
    <source>
        <tissue evidence="4">Venom</tissue>
    </source>
</reference>
<gene>
    <name evidence="6" type="primary">phtx2</name>
</gene>
<evidence type="ECO:0000250" key="1"/>
<evidence type="ECO:0000250" key="2">
    <source>
        <dbReference type="UniProtKB" id="Q5MJP5"/>
    </source>
</evidence>
<evidence type="ECO:0000255" key="3">
    <source>
        <dbReference type="PROSITE-ProRule" id="PRU01210"/>
    </source>
</evidence>
<evidence type="ECO:0000269" key="4">
    <source>
    </source>
</evidence>
<evidence type="ECO:0000305" key="5"/>
<evidence type="ECO:0000312" key="6">
    <source>
        <dbReference type="EMBL" id="AAW29438.1"/>
    </source>
</evidence>
<keyword id="KW-1015">Disulfide bond</keyword>
<keyword id="KW-0872">Ion channel impairing toxin</keyword>
<keyword id="KW-0528">Neurotoxin</keyword>
<keyword id="KW-0964">Secreted</keyword>
<keyword id="KW-0800">Toxin</keyword>
<keyword id="KW-0738">Voltage-gated sodium channel impairing toxin</keyword>
<feature type="chain" id="PRO_0000066725" description="Phaiodotoxin-2">
    <location>
        <begin position="1" status="less than"/>
        <end position="72"/>
    </location>
</feature>
<feature type="domain" description="LCN-type CS-alpha/beta" evidence="3">
    <location>
        <begin position="1" status="less than"/>
        <end position="72"/>
    </location>
</feature>
<feature type="disulfide bond" evidence="3">
    <location>
        <begin position="13"/>
        <end position="38"/>
    </location>
</feature>
<feature type="disulfide bond" evidence="3">
    <location>
        <begin position="23"/>
        <end position="50"/>
    </location>
</feature>
<feature type="disulfide bond" evidence="3">
    <location>
        <begin position="27"/>
        <end position="52"/>
    </location>
</feature>
<feature type="disulfide bond" evidence="3">
    <location>
        <begin position="63"/>
        <end position="71"/>
    </location>
</feature>
<feature type="non-terminal residue" evidence="6">
    <location>
        <position position="1"/>
    </location>
</feature>
<proteinExistence type="evidence at transcript level"/>
<organism>
    <name type="scientific">Anuroctonus phaiodactylus</name>
    <name type="common">Mafia scorpion</name>
    <dbReference type="NCBI Taxonomy" id="246982"/>
    <lineage>
        <taxon>Eukaryota</taxon>
        <taxon>Metazoa</taxon>
        <taxon>Ecdysozoa</taxon>
        <taxon>Arthropoda</taxon>
        <taxon>Chelicerata</taxon>
        <taxon>Arachnida</taxon>
        <taxon>Scorpiones</taxon>
        <taxon>Iurida</taxon>
        <taxon>Chactoidea</taxon>
        <taxon>Chactidae</taxon>
        <taxon>Uroctoninae</taxon>
        <taxon>Anuroctonus</taxon>
    </lineage>
</organism>
<dbReference type="EMBL" id="AY781123">
    <property type="protein sequence ID" value="AAW29438.1"/>
    <property type="molecule type" value="mRNA"/>
</dbReference>
<dbReference type="SMR" id="Q5MJP4"/>
<dbReference type="GO" id="GO:0005615">
    <property type="term" value="C:extracellular space"/>
    <property type="evidence" value="ECO:0000250"/>
    <property type="project" value="UniProtKB"/>
</dbReference>
<dbReference type="GO" id="GO:0019871">
    <property type="term" value="F:sodium channel inhibitor activity"/>
    <property type="evidence" value="ECO:0007669"/>
    <property type="project" value="InterPro"/>
</dbReference>
<dbReference type="GO" id="GO:0090729">
    <property type="term" value="F:toxin activity"/>
    <property type="evidence" value="ECO:0007669"/>
    <property type="project" value="UniProtKB-KW"/>
</dbReference>
<dbReference type="FunFam" id="3.30.30.10:FF:000014">
    <property type="match status" value="1"/>
</dbReference>
<dbReference type="Gene3D" id="3.30.30.10">
    <property type="entry name" value="Knottin, scorpion toxin-like"/>
    <property type="match status" value="1"/>
</dbReference>
<dbReference type="InterPro" id="IPR044062">
    <property type="entry name" value="LCN-type_CS_alpha_beta_dom"/>
</dbReference>
<dbReference type="InterPro" id="IPR036574">
    <property type="entry name" value="Scorpion_toxin-like_sf"/>
</dbReference>
<dbReference type="InterPro" id="IPR002061">
    <property type="entry name" value="Scorpion_toxinL/defensin"/>
</dbReference>
<dbReference type="Pfam" id="PF00537">
    <property type="entry name" value="Toxin_3"/>
    <property type="match status" value="1"/>
</dbReference>
<dbReference type="SUPFAM" id="SSF57095">
    <property type="entry name" value="Scorpion toxin-like"/>
    <property type="match status" value="1"/>
</dbReference>
<dbReference type="PROSITE" id="PS51863">
    <property type="entry name" value="LCN_CSAB"/>
    <property type="match status" value="1"/>
</dbReference>
<accession>Q5MJP4</accession>
<sequence>KFIRHKDESFYECGQLIGYQQYCVNACQAHGSKEKGYCKGMAPFGLPGGCYCPKLPSNRVKMCFGALESKCA</sequence>
<name>SCX2_ANUPH</name>
<protein>
    <recommendedName>
        <fullName>Phaiodotoxin-2</fullName>
    </recommendedName>
</protein>